<proteinExistence type="inferred from homology"/>
<dbReference type="EC" id="3.1.1.31" evidence="1"/>
<dbReference type="EMBL" id="CP000826">
    <property type="protein sequence ID" value="ABV40411.1"/>
    <property type="molecule type" value="Genomic_DNA"/>
</dbReference>
<dbReference type="SMR" id="A8GBC1"/>
<dbReference type="STRING" id="399741.Spro_1307"/>
<dbReference type="KEGG" id="spe:Spro_1307"/>
<dbReference type="eggNOG" id="COG2706">
    <property type="taxonomic scope" value="Bacteria"/>
</dbReference>
<dbReference type="HOGENOM" id="CLU_038716_2_0_6"/>
<dbReference type="OrthoDB" id="9790815at2"/>
<dbReference type="UniPathway" id="UPA00115">
    <property type="reaction ID" value="UER00409"/>
</dbReference>
<dbReference type="GO" id="GO:0005829">
    <property type="term" value="C:cytosol"/>
    <property type="evidence" value="ECO:0007669"/>
    <property type="project" value="TreeGrafter"/>
</dbReference>
<dbReference type="GO" id="GO:0017057">
    <property type="term" value="F:6-phosphogluconolactonase activity"/>
    <property type="evidence" value="ECO:0007669"/>
    <property type="project" value="UniProtKB-UniRule"/>
</dbReference>
<dbReference type="GO" id="GO:0006006">
    <property type="term" value="P:glucose metabolic process"/>
    <property type="evidence" value="ECO:0007669"/>
    <property type="project" value="UniProtKB-KW"/>
</dbReference>
<dbReference type="GO" id="GO:0009051">
    <property type="term" value="P:pentose-phosphate shunt, oxidative branch"/>
    <property type="evidence" value="ECO:0007669"/>
    <property type="project" value="UniProtKB-UniRule"/>
</dbReference>
<dbReference type="Gene3D" id="2.130.10.10">
    <property type="entry name" value="YVTN repeat-like/Quinoprotein amine dehydrogenase"/>
    <property type="match status" value="1"/>
</dbReference>
<dbReference type="HAMAP" id="MF_01605">
    <property type="entry name" value="6P_gluconolactonase"/>
    <property type="match status" value="1"/>
</dbReference>
<dbReference type="InterPro" id="IPR022528">
    <property type="entry name" value="6-phosphogluconolactonase_YbhE"/>
</dbReference>
<dbReference type="InterPro" id="IPR050282">
    <property type="entry name" value="Cycloisomerase_2"/>
</dbReference>
<dbReference type="InterPro" id="IPR019405">
    <property type="entry name" value="Lactonase_7-beta_prop"/>
</dbReference>
<dbReference type="InterPro" id="IPR011045">
    <property type="entry name" value="N2O_reductase_N"/>
</dbReference>
<dbReference type="InterPro" id="IPR015943">
    <property type="entry name" value="WD40/YVTN_repeat-like_dom_sf"/>
</dbReference>
<dbReference type="NCBIfam" id="NF008258">
    <property type="entry name" value="PRK11028.1"/>
    <property type="match status" value="1"/>
</dbReference>
<dbReference type="PANTHER" id="PTHR30344:SF1">
    <property type="entry name" value="6-PHOSPHOGLUCONOLACTONASE"/>
    <property type="match status" value="1"/>
</dbReference>
<dbReference type="PANTHER" id="PTHR30344">
    <property type="entry name" value="6-PHOSPHOGLUCONOLACTONASE-RELATED"/>
    <property type="match status" value="1"/>
</dbReference>
<dbReference type="Pfam" id="PF10282">
    <property type="entry name" value="Lactonase"/>
    <property type="match status" value="1"/>
</dbReference>
<dbReference type="SUPFAM" id="SSF50974">
    <property type="entry name" value="Nitrous oxide reductase, N-terminal domain"/>
    <property type="match status" value="2"/>
</dbReference>
<protein>
    <recommendedName>
        <fullName evidence="1">6-phosphogluconolactonase</fullName>
        <shortName evidence="1">6-P-gluconolactonase</shortName>
        <ecNumber evidence="1">3.1.1.31</ecNumber>
    </recommendedName>
</protein>
<comment type="function">
    <text evidence="1">Catalyzes the hydrolysis of 6-phosphogluconolactone to 6-phosphogluconate.</text>
</comment>
<comment type="catalytic activity">
    <reaction evidence="1">
        <text>6-phospho-D-glucono-1,5-lactone + H2O = 6-phospho-D-gluconate + H(+)</text>
        <dbReference type="Rhea" id="RHEA:12556"/>
        <dbReference type="ChEBI" id="CHEBI:15377"/>
        <dbReference type="ChEBI" id="CHEBI:15378"/>
        <dbReference type="ChEBI" id="CHEBI:57955"/>
        <dbReference type="ChEBI" id="CHEBI:58759"/>
        <dbReference type="EC" id="3.1.1.31"/>
    </reaction>
</comment>
<comment type="pathway">
    <text evidence="1">Carbohydrate degradation; pentose phosphate pathway; D-ribulose 5-phosphate from D-glucose 6-phosphate (oxidative stage): step 2/3.</text>
</comment>
<comment type="similarity">
    <text evidence="1">Belongs to the cycloisomerase 2 family.</text>
</comment>
<organism>
    <name type="scientific">Serratia proteamaculans (strain 568)</name>
    <dbReference type="NCBI Taxonomy" id="399741"/>
    <lineage>
        <taxon>Bacteria</taxon>
        <taxon>Pseudomonadati</taxon>
        <taxon>Pseudomonadota</taxon>
        <taxon>Gammaproteobacteria</taxon>
        <taxon>Enterobacterales</taxon>
        <taxon>Yersiniaceae</taxon>
        <taxon>Serratia</taxon>
    </lineage>
</organism>
<accession>A8GBC1</accession>
<gene>
    <name evidence="1" type="primary">pgl</name>
    <name type="ordered locus">Spro_1307</name>
</gene>
<evidence type="ECO:0000255" key="1">
    <source>
        <dbReference type="HAMAP-Rule" id="MF_01605"/>
    </source>
</evidence>
<feature type="chain" id="PRO_1000069412" description="6-phosphogluconolactonase">
    <location>
        <begin position="1"/>
        <end position="331"/>
    </location>
</feature>
<sequence length="331" mass="35802">MKQIVYVASPESQQIHVWQLSDAGALELLQTVEAPGQVQPMAIHPDRTHLYVGVRPAFGIVSYRIEADGTLQQAGMAPLPGSPTHISTDLQGRYLFSASYSGNCASVSPIGHDGVVVAPIQQIDGLTAPHSANIDPTNQLLLVPCLKEDRIRLFNLDLQGELTPHTQEAVTTASGAGPRHMAFHHNDKYAYCVNELDGTVDVFAISENGGKYTLVQTLDIMPADFNGTRWAADIHITPNGRFLYTSDRTASILTIFSVSEDGSTLSVVGYHPTEEQPRGFNIDHSGRFVISSGQKSGHIGVYEIDQASGKLTTLARYPVGKGPMWVSILAK</sequence>
<reference key="1">
    <citation type="submission" date="2007-09" db="EMBL/GenBank/DDBJ databases">
        <title>Complete sequence of chromosome of Serratia proteamaculans 568.</title>
        <authorList>
            <consortium name="US DOE Joint Genome Institute"/>
            <person name="Copeland A."/>
            <person name="Lucas S."/>
            <person name="Lapidus A."/>
            <person name="Barry K."/>
            <person name="Glavina del Rio T."/>
            <person name="Dalin E."/>
            <person name="Tice H."/>
            <person name="Pitluck S."/>
            <person name="Chain P."/>
            <person name="Malfatti S."/>
            <person name="Shin M."/>
            <person name="Vergez L."/>
            <person name="Schmutz J."/>
            <person name="Larimer F."/>
            <person name="Land M."/>
            <person name="Hauser L."/>
            <person name="Kyrpides N."/>
            <person name="Kim E."/>
            <person name="Taghavi S."/>
            <person name="Newman L."/>
            <person name="Vangronsveld J."/>
            <person name="van der Lelie D."/>
            <person name="Richardson P."/>
        </authorList>
    </citation>
    <scope>NUCLEOTIDE SEQUENCE [LARGE SCALE GENOMIC DNA]</scope>
    <source>
        <strain>568</strain>
    </source>
</reference>
<keyword id="KW-0119">Carbohydrate metabolism</keyword>
<keyword id="KW-0313">Glucose metabolism</keyword>
<keyword id="KW-0378">Hydrolase</keyword>
<name>6PGL_SERP5</name>